<sequence length="224" mass="24594">MRREISFLLQPRCLLLLVALTIFLVFALFNTGKDEEKQVIEDHEITNRVFLDVDIDGQRLGRIVIGLYGTVVPKTVENFRALCTGEKGKTSSGKPLHYKGTPFHRIISGFVIQGGDIIHGDGKSSDSIYGGTFPDENFKIQHSHAGMVAMANTGPDSNGSQFFITTVKASWLEGEHVVLGKVIQGMDNVFAIEGGAGTYSGKPRKKVVIADSGEIPKDKWDEER</sequence>
<keyword id="KW-0143">Chaperone</keyword>
<keyword id="KW-0256">Endoplasmic reticulum</keyword>
<keyword id="KW-0325">Glycoprotein</keyword>
<keyword id="KW-0413">Isomerase</keyword>
<keyword id="KW-1185">Reference proteome</keyword>
<keyword id="KW-0697">Rotamase</keyword>
<keyword id="KW-0732">Signal</keyword>
<reference key="1">
    <citation type="journal article" date="2004" name="Plant Physiol.">
        <title>The Arabidopsis cyclophilin gene family.</title>
        <authorList>
            <person name="Romano P.G.N."/>
            <person name="Horton P."/>
            <person name="Gray J.E."/>
        </authorList>
    </citation>
    <scope>NUCLEOTIDE SEQUENCE [MRNA]</scope>
    <scope>TISSUE SPECIFICITY</scope>
    <scope>GENE FAMILY</scope>
    <scope>NOMENCLATURE</scope>
</reference>
<reference key="2">
    <citation type="journal article" date="1999" name="Nature">
        <title>Sequence and analysis of chromosome 4 of the plant Arabidopsis thaliana.</title>
        <authorList>
            <person name="Mayer K.F.X."/>
            <person name="Schueller C."/>
            <person name="Wambutt R."/>
            <person name="Murphy G."/>
            <person name="Volckaert G."/>
            <person name="Pohl T."/>
            <person name="Duesterhoeft A."/>
            <person name="Stiekema W."/>
            <person name="Entian K.-D."/>
            <person name="Terryn N."/>
            <person name="Harris B."/>
            <person name="Ansorge W."/>
            <person name="Brandt P."/>
            <person name="Grivell L.A."/>
            <person name="Rieger M."/>
            <person name="Weichselgartner M."/>
            <person name="de Simone V."/>
            <person name="Obermaier B."/>
            <person name="Mache R."/>
            <person name="Mueller M."/>
            <person name="Kreis M."/>
            <person name="Delseny M."/>
            <person name="Puigdomenech P."/>
            <person name="Watson M."/>
            <person name="Schmidtheini T."/>
            <person name="Reichert B."/>
            <person name="Portetelle D."/>
            <person name="Perez-Alonso M."/>
            <person name="Boutry M."/>
            <person name="Bancroft I."/>
            <person name="Vos P."/>
            <person name="Hoheisel J."/>
            <person name="Zimmermann W."/>
            <person name="Wedler H."/>
            <person name="Ridley P."/>
            <person name="Langham S.-A."/>
            <person name="McCullagh B."/>
            <person name="Bilham L."/>
            <person name="Robben J."/>
            <person name="van der Schueren J."/>
            <person name="Grymonprez B."/>
            <person name="Chuang Y.-J."/>
            <person name="Vandenbussche F."/>
            <person name="Braeken M."/>
            <person name="Weltjens I."/>
            <person name="Voet M."/>
            <person name="Bastiaens I."/>
            <person name="Aert R."/>
            <person name="Defoor E."/>
            <person name="Weitzenegger T."/>
            <person name="Bothe G."/>
            <person name="Ramsperger U."/>
            <person name="Hilbert H."/>
            <person name="Braun M."/>
            <person name="Holzer E."/>
            <person name="Brandt A."/>
            <person name="Peters S."/>
            <person name="van Staveren M."/>
            <person name="Dirkse W."/>
            <person name="Mooijman P."/>
            <person name="Klein Lankhorst R."/>
            <person name="Rose M."/>
            <person name="Hauf J."/>
            <person name="Koetter P."/>
            <person name="Berneiser S."/>
            <person name="Hempel S."/>
            <person name="Feldpausch M."/>
            <person name="Lamberth S."/>
            <person name="Van den Daele H."/>
            <person name="De Keyser A."/>
            <person name="Buysshaert C."/>
            <person name="Gielen J."/>
            <person name="Villarroel R."/>
            <person name="De Clercq R."/>
            <person name="van Montagu M."/>
            <person name="Rogers J."/>
            <person name="Cronin A."/>
            <person name="Quail M.A."/>
            <person name="Bray-Allen S."/>
            <person name="Clark L."/>
            <person name="Doggett J."/>
            <person name="Hall S."/>
            <person name="Kay M."/>
            <person name="Lennard N."/>
            <person name="McLay K."/>
            <person name="Mayes R."/>
            <person name="Pettett A."/>
            <person name="Rajandream M.A."/>
            <person name="Lyne M."/>
            <person name="Benes V."/>
            <person name="Rechmann S."/>
            <person name="Borkova D."/>
            <person name="Bloecker H."/>
            <person name="Scharfe M."/>
            <person name="Grimm M."/>
            <person name="Loehnert T.-H."/>
            <person name="Dose S."/>
            <person name="de Haan M."/>
            <person name="Maarse A.C."/>
            <person name="Schaefer M."/>
            <person name="Mueller-Auer S."/>
            <person name="Gabel C."/>
            <person name="Fuchs M."/>
            <person name="Fartmann B."/>
            <person name="Granderath K."/>
            <person name="Dauner D."/>
            <person name="Herzl A."/>
            <person name="Neumann S."/>
            <person name="Argiriou A."/>
            <person name="Vitale D."/>
            <person name="Liguori R."/>
            <person name="Piravandi E."/>
            <person name="Massenet O."/>
            <person name="Quigley F."/>
            <person name="Clabauld G."/>
            <person name="Muendlein A."/>
            <person name="Felber R."/>
            <person name="Schnabl S."/>
            <person name="Hiller R."/>
            <person name="Schmidt W."/>
            <person name="Lecharny A."/>
            <person name="Aubourg S."/>
            <person name="Chefdor F."/>
            <person name="Cooke R."/>
            <person name="Berger C."/>
            <person name="Monfort A."/>
            <person name="Casacuberta E."/>
            <person name="Gibbons T."/>
            <person name="Weber N."/>
            <person name="Vandenbol M."/>
            <person name="Bargues M."/>
            <person name="Terol J."/>
            <person name="Torres A."/>
            <person name="Perez-Perez A."/>
            <person name="Purnelle B."/>
            <person name="Bent E."/>
            <person name="Johnson S."/>
            <person name="Tacon D."/>
            <person name="Jesse T."/>
            <person name="Heijnen L."/>
            <person name="Schwarz S."/>
            <person name="Scholler P."/>
            <person name="Heber S."/>
            <person name="Francs P."/>
            <person name="Bielke C."/>
            <person name="Frishman D."/>
            <person name="Haase D."/>
            <person name="Lemcke K."/>
            <person name="Mewes H.-W."/>
            <person name="Stocker S."/>
            <person name="Zaccaria P."/>
            <person name="Bevan M."/>
            <person name="Wilson R.K."/>
            <person name="de la Bastide M."/>
            <person name="Habermann K."/>
            <person name="Parnell L."/>
            <person name="Dedhia N."/>
            <person name="Gnoj L."/>
            <person name="Schutz K."/>
            <person name="Huang E."/>
            <person name="Spiegel L."/>
            <person name="Sekhon M."/>
            <person name="Murray J."/>
            <person name="Sheet P."/>
            <person name="Cordes M."/>
            <person name="Abu-Threideh J."/>
            <person name="Stoneking T."/>
            <person name="Kalicki J."/>
            <person name="Graves T."/>
            <person name="Harmon G."/>
            <person name="Edwards J."/>
            <person name="Latreille P."/>
            <person name="Courtney L."/>
            <person name="Cloud J."/>
            <person name="Abbott A."/>
            <person name="Scott K."/>
            <person name="Johnson D."/>
            <person name="Minx P."/>
            <person name="Bentley D."/>
            <person name="Fulton B."/>
            <person name="Miller N."/>
            <person name="Greco T."/>
            <person name="Kemp K."/>
            <person name="Kramer J."/>
            <person name="Fulton L."/>
            <person name="Mardis E."/>
            <person name="Dante M."/>
            <person name="Pepin K."/>
            <person name="Hillier L.W."/>
            <person name="Nelson J."/>
            <person name="Spieth J."/>
            <person name="Ryan E."/>
            <person name="Andrews S."/>
            <person name="Geisel C."/>
            <person name="Layman D."/>
            <person name="Du H."/>
            <person name="Ali J."/>
            <person name="Berghoff A."/>
            <person name="Jones K."/>
            <person name="Drone K."/>
            <person name="Cotton M."/>
            <person name="Joshu C."/>
            <person name="Antonoiu B."/>
            <person name="Zidanic M."/>
            <person name="Strong C."/>
            <person name="Sun H."/>
            <person name="Lamar B."/>
            <person name="Yordan C."/>
            <person name="Ma P."/>
            <person name="Zhong J."/>
            <person name="Preston R."/>
            <person name="Vil D."/>
            <person name="Shekher M."/>
            <person name="Matero A."/>
            <person name="Shah R."/>
            <person name="Swaby I.K."/>
            <person name="O'Shaughnessy A."/>
            <person name="Rodriguez M."/>
            <person name="Hoffman J."/>
            <person name="Till S."/>
            <person name="Granat S."/>
            <person name="Shohdy N."/>
            <person name="Hasegawa A."/>
            <person name="Hameed A."/>
            <person name="Lodhi M."/>
            <person name="Johnson A."/>
            <person name="Chen E."/>
            <person name="Marra M.A."/>
            <person name="Martienssen R."/>
            <person name="McCombie W.R."/>
        </authorList>
    </citation>
    <scope>NUCLEOTIDE SEQUENCE [LARGE SCALE GENOMIC DNA]</scope>
    <source>
        <strain>cv. Columbia</strain>
    </source>
</reference>
<reference key="3">
    <citation type="journal article" date="2017" name="Plant J.">
        <title>Araport11: a complete reannotation of the Arabidopsis thaliana reference genome.</title>
        <authorList>
            <person name="Cheng C.Y."/>
            <person name="Krishnakumar V."/>
            <person name="Chan A.P."/>
            <person name="Thibaud-Nissen F."/>
            <person name="Schobel S."/>
            <person name="Town C.D."/>
        </authorList>
    </citation>
    <scope>GENOME REANNOTATION</scope>
    <source>
        <strain>cv. Columbia</strain>
    </source>
</reference>
<reference key="4">
    <citation type="journal article" date="2003" name="Science">
        <title>Empirical analysis of transcriptional activity in the Arabidopsis genome.</title>
        <authorList>
            <person name="Yamada K."/>
            <person name="Lim J."/>
            <person name="Dale J.M."/>
            <person name="Chen H."/>
            <person name="Shinn P."/>
            <person name="Palm C.J."/>
            <person name="Southwick A.M."/>
            <person name="Wu H.C."/>
            <person name="Kim C.J."/>
            <person name="Nguyen M."/>
            <person name="Pham P.K."/>
            <person name="Cheuk R.F."/>
            <person name="Karlin-Newmann G."/>
            <person name="Liu S.X."/>
            <person name="Lam B."/>
            <person name="Sakano H."/>
            <person name="Wu T."/>
            <person name="Yu G."/>
            <person name="Miranda M."/>
            <person name="Quach H.L."/>
            <person name="Tripp M."/>
            <person name="Chang C.H."/>
            <person name="Lee J.M."/>
            <person name="Toriumi M.J."/>
            <person name="Chan M.M."/>
            <person name="Tang C.C."/>
            <person name="Onodera C.S."/>
            <person name="Deng J.M."/>
            <person name="Akiyama K."/>
            <person name="Ansari Y."/>
            <person name="Arakawa T."/>
            <person name="Banh J."/>
            <person name="Banno F."/>
            <person name="Bowser L."/>
            <person name="Brooks S.Y."/>
            <person name="Carninci P."/>
            <person name="Chao Q."/>
            <person name="Choy N."/>
            <person name="Enju A."/>
            <person name="Goldsmith A.D."/>
            <person name="Gurjal M."/>
            <person name="Hansen N.F."/>
            <person name="Hayashizaki Y."/>
            <person name="Johnson-Hopson C."/>
            <person name="Hsuan V.W."/>
            <person name="Iida K."/>
            <person name="Karnes M."/>
            <person name="Khan S."/>
            <person name="Koesema E."/>
            <person name="Ishida J."/>
            <person name="Jiang P.X."/>
            <person name="Jones T."/>
            <person name="Kawai J."/>
            <person name="Kamiya A."/>
            <person name="Meyers C."/>
            <person name="Nakajima M."/>
            <person name="Narusaka M."/>
            <person name="Seki M."/>
            <person name="Sakurai T."/>
            <person name="Satou M."/>
            <person name="Tamse R."/>
            <person name="Vaysberg M."/>
            <person name="Wallender E.K."/>
            <person name="Wong C."/>
            <person name="Yamamura Y."/>
            <person name="Yuan S."/>
            <person name="Shinozaki K."/>
            <person name="Davis R.W."/>
            <person name="Theologis A."/>
            <person name="Ecker J.R."/>
        </authorList>
    </citation>
    <scope>NUCLEOTIDE SEQUENCE [LARGE SCALE MRNA]</scope>
    <source>
        <strain>cv. Columbia</strain>
    </source>
</reference>
<reference key="5">
    <citation type="journal article" date="2002" name="Science">
        <title>Functional annotation of a full-length Arabidopsis cDNA collection.</title>
        <authorList>
            <person name="Seki M."/>
            <person name="Narusaka M."/>
            <person name="Kamiya A."/>
            <person name="Ishida J."/>
            <person name="Satou M."/>
            <person name="Sakurai T."/>
            <person name="Nakajima M."/>
            <person name="Enju A."/>
            <person name="Akiyama K."/>
            <person name="Oono Y."/>
            <person name="Muramatsu M."/>
            <person name="Hayashizaki Y."/>
            <person name="Kawai J."/>
            <person name="Carninci P."/>
            <person name="Itoh M."/>
            <person name="Ishii Y."/>
            <person name="Arakawa T."/>
            <person name="Shibata K."/>
            <person name="Shinagawa A."/>
            <person name="Shinozaki K."/>
        </authorList>
    </citation>
    <scope>NUCLEOTIDE SEQUENCE [LARGE SCALE MRNA]</scope>
    <source>
        <strain>cv. Columbia</strain>
    </source>
</reference>
<reference key="6">
    <citation type="journal article" date="2004" name="Plant Physiol.">
        <title>Immunophilins and parvulins. Superfamily of peptidyl prolyl isomerases in Arabidopsis.</title>
        <authorList>
            <person name="He Z."/>
            <person name="Li L."/>
            <person name="Luan S."/>
        </authorList>
    </citation>
    <scope>TISSUE SPECIFICITY</scope>
    <scope>GENE FAMILY</scope>
    <scope>NOMENCLATURE</scope>
</reference>
<proteinExistence type="evidence at transcript level"/>
<comment type="function">
    <text evidence="1">PPIases accelerate the folding of proteins. It catalyzes the cis-trans isomerization of proline imidic peptide bonds in oligopeptides (By similarity).</text>
</comment>
<comment type="catalytic activity">
    <reaction>
        <text>[protein]-peptidylproline (omega=180) = [protein]-peptidylproline (omega=0)</text>
        <dbReference type="Rhea" id="RHEA:16237"/>
        <dbReference type="Rhea" id="RHEA-COMP:10747"/>
        <dbReference type="Rhea" id="RHEA-COMP:10748"/>
        <dbReference type="ChEBI" id="CHEBI:83833"/>
        <dbReference type="ChEBI" id="CHEBI:83834"/>
        <dbReference type="EC" id="5.2.1.8"/>
    </reaction>
</comment>
<comment type="subcellular location">
    <subcellularLocation>
        <location evidence="1">Endoplasmic reticulum</location>
    </subcellularLocation>
</comment>
<comment type="tissue specificity">
    <text evidence="4 5">Ubiquitous.</text>
</comment>
<comment type="similarity">
    <text evidence="6">Belongs to the cyclophilin-type PPIase family.</text>
</comment>
<protein>
    <recommendedName>
        <fullName>Peptidyl-prolyl cis-trans isomerase CYP21-1</fullName>
        <shortName>PPIase CYP21-1</shortName>
        <ecNumber>5.2.1.8</ecNumber>
    </recommendedName>
    <alternativeName>
        <fullName>Cyclophilin of 21 kDa 1</fullName>
    </alternativeName>
    <alternativeName>
        <fullName>Cyclophilin-21-1</fullName>
    </alternativeName>
</protein>
<dbReference type="EC" id="5.2.1.8"/>
<dbReference type="EMBL" id="AY568518">
    <property type="protein sequence ID" value="AAS75301.1"/>
    <property type="molecule type" value="mRNA"/>
</dbReference>
<dbReference type="EMBL" id="AL022023">
    <property type="protein sequence ID" value="CAA17761.1"/>
    <property type="molecule type" value="Genomic_DNA"/>
</dbReference>
<dbReference type="EMBL" id="AL161586">
    <property type="protein sequence ID" value="CAB80213.1"/>
    <property type="molecule type" value="Genomic_DNA"/>
</dbReference>
<dbReference type="EMBL" id="CP002687">
    <property type="protein sequence ID" value="AEE86441.1"/>
    <property type="molecule type" value="Genomic_DNA"/>
</dbReference>
<dbReference type="EMBL" id="BT004972">
    <property type="protein sequence ID" value="AAO50505.1"/>
    <property type="molecule type" value="mRNA"/>
</dbReference>
<dbReference type="EMBL" id="AK117671">
    <property type="protein sequence ID" value="BAC42324.1"/>
    <property type="molecule type" value="mRNA"/>
</dbReference>
<dbReference type="PIR" id="T05766">
    <property type="entry name" value="T05766"/>
</dbReference>
<dbReference type="RefSeq" id="NP_195222.1">
    <property type="nucleotide sequence ID" value="NM_119662.4"/>
</dbReference>
<dbReference type="SMR" id="O49605"/>
<dbReference type="FunCoup" id="O49605">
    <property type="interactions" value="595"/>
</dbReference>
<dbReference type="STRING" id="3702.O49605"/>
<dbReference type="GlyCosmos" id="O49605">
    <property type="glycosylation" value="1 site, No reported glycans"/>
</dbReference>
<dbReference type="GlyGen" id="O49605">
    <property type="glycosylation" value="1 site"/>
</dbReference>
<dbReference type="SwissPalm" id="O49605"/>
<dbReference type="PaxDb" id="3702-AT4G34960.1"/>
<dbReference type="ProteomicsDB" id="220303"/>
<dbReference type="EnsemblPlants" id="AT4G34960.1">
    <property type="protein sequence ID" value="AT4G34960.1"/>
    <property type="gene ID" value="AT4G34960"/>
</dbReference>
<dbReference type="GeneID" id="829648"/>
<dbReference type="Gramene" id="AT4G34960.1">
    <property type="protein sequence ID" value="AT4G34960.1"/>
    <property type="gene ID" value="AT4G34960"/>
</dbReference>
<dbReference type="KEGG" id="ath:AT4G34960"/>
<dbReference type="Araport" id="AT4G34960"/>
<dbReference type="TAIR" id="AT4G34960">
    <property type="gene designation" value="CYP21-1"/>
</dbReference>
<dbReference type="eggNOG" id="KOG0865">
    <property type="taxonomic scope" value="Eukaryota"/>
</dbReference>
<dbReference type="HOGENOM" id="CLU_012062_4_2_1"/>
<dbReference type="InParanoid" id="O49605"/>
<dbReference type="OMA" id="CSIINSG"/>
<dbReference type="OrthoDB" id="193499at2759"/>
<dbReference type="PhylomeDB" id="O49605"/>
<dbReference type="PRO" id="PR:O49605"/>
<dbReference type="Proteomes" id="UP000006548">
    <property type="component" value="Chromosome 4"/>
</dbReference>
<dbReference type="ExpressionAtlas" id="O49605">
    <property type="expression patterns" value="baseline and differential"/>
</dbReference>
<dbReference type="GO" id="GO:0005783">
    <property type="term" value="C:endoplasmic reticulum"/>
    <property type="evidence" value="ECO:0007669"/>
    <property type="project" value="UniProtKB-SubCell"/>
</dbReference>
<dbReference type="GO" id="GO:0005768">
    <property type="term" value="C:endosome"/>
    <property type="evidence" value="ECO:0007005"/>
    <property type="project" value="TAIR"/>
</dbReference>
<dbReference type="GO" id="GO:0005794">
    <property type="term" value="C:Golgi apparatus"/>
    <property type="evidence" value="ECO:0007005"/>
    <property type="project" value="TAIR"/>
</dbReference>
<dbReference type="GO" id="GO:0005797">
    <property type="term" value="C:Golgi medial cisterna"/>
    <property type="evidence" value="ECO:0007005"/>
    <property type="project" value="TAIR"/>
</dbReference>
<dbReference type="GO" id="GO:0005802">
    <property type="term" value="C:trans-Golgi network"/>
    <property type="evidence" value="ECO:0007005"/>
    <property type="project" value="TAIR"/>
</dbReference>
<dbReference type="GO" id="GO:0003755">
    <property type="term" value="F:peptidyl-prolyl cis-trans isomerase activity"/>
    <property type="evidence" value="ECO:0007669"/>
    <property type="project" value="UniProtKB-KW"/>
</dbReference>
<dbReference type="GO" id="GO:0006457">
    <property type="term" value="P:protein folding"/>
    <property type="evidence" value="ECO:0007669"/>
    <property type="project" value="InterPro"/>
</dbReference>
<dbReference type="FunFam" id="2.40.100.10:FF:000030">
    <property type="entry name" value="Peptidyl-prolyl cis-trans isomerase"/>
    <property type="match status" value="1"/>
</dbReference>
<dbReference type="Gene3D" id="2.40.100.10">
    <property type="entry name" value="Cyclophilin-like"/>
    <property type="match status" value="1"/>
</dbReference>
<dbReference type="InterPro" id="IPR029000">
    <property type="entry name" value="Cyclophilin-like_dom_sf"/>
</dbReference>
<dbReference type="InterPro" id="IPR020892">
    <property type="entry name" value="Cyclophilin-type_PPIase_CS"/>
</dbReference>
<dbReference type="InterPro" id="IPR002130">
    <property type="entry name" value="Cyclophilin-type_PPIase_dom"/>
</dbReference>
<dbReference type="PANTHER" id="PTHR11071">
    <property type="entry name" value="PEPTIDYL-PROLYL CIS-TRANS ISOMERASE"/>
    <property type="match status" value="1"/>
</dbReference>
<dbReference type="PANTHER" id="PTHR11071:SF449">
    <property type="entry name" value="PEPTIDYL-PROLYL CIS-TRANS ISOMERASE CYP21-1"/>
    <property type="match status" value="1"/>
</dbReference>
<dbReference type="Pfam" id="PF00160">
    <property type="entry name" value="Pro_isomerase"/>
    <property type="match status" value="1"/>
</dbReference>
<dbReference type="PRINTS" id="PR00153">
    <property type="entry name" value="CSAPPISMRASE"/>
</dbReference>
<dbReference type="SUPFAM" id="SSF50891">
    <property type="entry name" value="Cyclophilin-like"/>
    <property type="match status" value="1"/>
</dbReference>
<dbReference type="PROSITE" id="PS00170">
    <property type="entry name" value="CSA_PPIASE_1"/>
    <property type="match status" value="1"/>
</dbReference>
<dbReference type="PROSITE" id="PS50072">
    <property type="entry name" value="CSA_PPIASE_2"/>
    <property type="match status" value="1"/>
</dbReference>
<gene>
    <name type="primary">CYP21-1</name>
    <name type="ordered locus">At4g34960</name>
    <name type="ORF">M4E13.20</name>
</gene>
<name>CP21A_ARATH</name>
<evidence type="ECO:0000250" key="1"/>
<evidence type="ECO:0000255" key="2"/>
<evidence type="ECO:0000255" key="3">
    <source>
        <dbReference type="PROSITE-ProRule" id="PRU00156"/>
    </source>
</evidence>
<evidence type="ECO:0000269" key="4">
    <source>
    </source>
</evidence>
<evidence type="ECO:0000269" key="5">
    <source>
    </source>
</evidence>
<evidence type="ECO:0000305" key="6"/>
<organism>
    <name type="scientific">Arabidopsis thaliana</name>
    <name type="common">Mouse-ear cress</name>
    <dbReference type="NCBI Taxonomy" id="3702"/>
    <lineage>
        <taxon>Eukaryota</taxon>
        <taxon>Viridiplantae</taxon>
        <taxon>Streptophyta</taxon>
        <taxon>Embryophyta</taxon>
        <taxon>Tracheophyta</taxon>
        <taxon>Spermatophyta</taxon>
        <taxon>Magnoliopsida</taxon>
        <taxon>eudicotyledons</taxon>
        <taxon>Gunneridae</taxon>
        <taxon>Pentapetalae</taxon>
        <taxon>rosids</taxon>
        <taxon>malvids</taxon>
        <taxon>Brassicales</taxon>
        <taxon>Brassicaceae</taxon>
        <taxon>Camelineae</taxon>
        <taxon>Arabidopsis</taxon>
    </lineage>
</organism>
<feature type="signal peptide" evidence="2">
    <location>
        <begin position="1"/>
        <end position="27"/>
    </location>
</feature>
<feature type="chain" id="PRO_0000429934" description="Peptidyl-prolyl cis-trans isomerase CYP21-1">
    <location>
        <begin position="28"/>
        <end position="224"/>
    </location>
</feature>
<feature type="domain" description="PPIase cyclophilin-type" evidence="3">
    <location>
        <begin position="50"/>
        <end position="214"/>
    </location>
</feature>
<feature type="glycosylation site" description="N-linked (GlcNAc...) asparagine" evidence="2">
    <location>
        <position position="158"/>
    </location>
</feature>
<accession>O49605</accession>